<comment type="subcellular location">
    <subcellularLocation>
        <location evidence="1">Cytoplasm</location>
        <location evidence="1">Nucleoid</location>
    </subcellularLocation>
</comment>
<comment type="similarity">
    <text evidence="1">Belongs to the YejK family.</text>
</comment>
<protein>
    <recommendedName>
        <fullName evidence="1">Nucleoid-associated protein YejK</fullName>
    </recommendedName>
</protein>
<accession>B7M536</accession>
<sequence>MSLDINQIALHQLIKRDEQNLELVLRDSLLEPTETVVEMVAELHRVYSAKNKAYGLFSEESELAQTLRLQRQGEEDFLAFSRAATGRLRDELAKYPFADGGFVLFCHYRYLAVEYLLVAVLSNLSSMRVNENLDINPTHYLDINHADIVARIDLTEWETNPESTRYLTFLKGRVGRKVADFFMDFLGASEGLNAKAQNRGLLQAVDDFTAEAQLDKAERQNVRQQVYSYCNEQLQAGEEIELESLSKELAGVSEVSFTEFAAEKGYELEESFPADRSTLRQLTKFAGSGGGLTINFDAMLLGERIFWDPATDTLTIKGTPPNLRDQLQRRTSGGN</sequence>
<name>NDPA_ECO8A</name>
<gene>
    <name evidence="1" type="primary">yejK</name>
    <name type="ordered locus">ECIAI1_2268</name>
</gene>
<evidence type="ECO:0000255" key="1">
    <source>
        <dbReference type="HAMAP-Rule" id="MF_00730"/>
    </source>
</evidence>
<feature type="chain" id="PRO_1000191562" description="Nucleoid-associated protein YejK">
    <location>
        <begin position="1"/>
        <end position="335"/>
    </location>
</feature>
<dbReference type="EMBL" id="CU928160">
    <property type="protein sequence ID" value="CAQ99113.1"/>
    <property type="molecule type" value="Genomic_DNA"/>
</dbReference>
<dbReference type="RefSeq" id="WP_000050789.1">
    <property type="nucleotide sequence ID" value="NC_011741.1"/>
</dbReference>
<dbReference type="SMR" id="B7M536"/>
<dbReference type="GeneID" id="75206440"/>
<dbReference type="KEGG" id="ecr:ECIAI1_2268"/>
<dbReference type="HOGENOM" id="CLU_063050_0_1_6"/>
<dbReference type="GO" id="GO:0043590">
    <property type="term" value="C:bacterial nucleoid"/>
    <property type="evidence" value="ECO:0007669"/>
    <property type="project" value="TreeGrafter"/>
</dbReference>
<dbReference type="GO" id="GO:0005737">
    <property type="term" value="C:cytoplasm"/>
    <property type="evidence" value="ECO:0007669"/>
    <property type="project" value="UniProtKB-UniRule"/>
</dbReference>
<dbReference type="GO" id="GO:0003690">
    <property type="term" value="F:double-stranded DNA binding"/>
    <property type="evidence" value="ECO:0007669"/>
    <property type="project" value="TreeGrafter"/>
</dbReference>
<dbReference type="GO" id="GO:0003727">
    <property type="term" value="F:single-stranded RNA binding"/>
    <property type="evidence" value="ECO:0007669"/>
    <property type="project" value="TreeGrafter"/>
</dbReference>
<dbReference type="HAMAP" id="MF_00730">
    <property type="entry name" value="NdpA"/>
    <property type="match status" value="1"/>
</dbReference>
<dbReference type="InterPro" id="IPR007358">
    <property type="entry name" value="Nucleoid_associated_NdpA"/>
</dbReference>
<dbReference type="NCBIfam" id="NF001557">
    <property type="entry name" value="PRK00378.1"/>
    <property type="match status" value="1"/>
</dbReference>
<dbReference type="PANTHER" id="PTHR38772">
    <property type="match status" value="1"/>
</dbReference>
<dbReference type="PANTHER" id="PTHR38772:SF1">
    <property type="entry name" value="NUCLEOID-ASSOCIATED PROTEIN YEJK"/>
    <property type="match status" value="1"/>
</dbReference>
<dbReference type="Pfam" id="PF04245">
    <property type="entry name" value="NA37"/>
    <property type="match status" value="1"/>
</dbReference>
<proteinExistence type="inferred from homology"/>
<organism>
    <name type="scientific">Escherichia coli O8 (strain IAI1)</name>
    <dbReference type="NCBI Taxonomy" id="585034"/>
    <lineage>
        <taxon>Bacteria</taxon>
        <taxon>Pseudomonadati</taxon>
        <taxon>Pseudomonadota</taxon>
        <taxon>Gammaproteobacteria</taxon>
        <taxon>Enterobacterales</taxon>
        <taxon>Enterobacteriaceae</taxon>
        <taxon>Escherichia</taxon>
    </lineage>
</organism>
<keyword id="KW-0963">Cytoplasm</keyword>
<reference key="1">
    <citation type="journal article" date="2009" name="PLoS Genet.">
        <title>Organised genome dynamics in the Escherichia coli species results in highly diverse adaptive paths.</title>
        <authorList>
            <person name="Touchon M."/>
            <person name="Hoede C."/>
            <person name="Tenaillon O."/>
            <person name="Barbe V."/>
            <person name="Baeriswyl S."/>
            <person name="Bidet P."/>
            <person name="Bingen E."/>
            <person name="Bonacorsi S."/>
            <person name="Bouchier C."/>
            <person name="Bouvet O."/>
            <person name="Calteau A."/>
            <person name="Chiapello H."/>
            <person name="Clermont O."/>
            <person name="Cruveiller S."/>
            <person name="Danchin A."/>
            <person name="Diard M."/>
            <person name="Dossat C."/>
            <person name="Karoui M.E."/>
            <person name="Frapy E."/>
            <person name="Garry L."/>
            <person name="Ghigo J.M."/>
            <person name="Gilles A.M."/>
            <person name="Johnson J."/>
            <person name="Le Bouguenec C."/>
            <person name="Lescat M."/>
            <person name="Mangenot S."/>
            <person name="Martinez-Jehanne V."/>
            <person name="Matic I."/>
            <person name="Nassif X."/>
            <person name="Oztas S."/>
            <person name="Petit M.A."/>
            <person name="Pichon C."/>
            <person name="Rouy Z."/>
            <person name="Ruf C.S."/>
            <person name="Schneider D."/>
            <person name="Tourret J."/>
            <person name="Vacherie B."/>
            <person name="Vallenet D."/>
            <person name="Medigue C."/>
            <person name="Rocha E.P.C."/>
            <person name="Denamur E."/>
        </authorList>
    </citation>
    <scope>NUCLEOTIDE SEQUENCE [LARGE SCALE GENOMIC DNA]</scope>
    <source>
        <strain>IAI1</strain>
    </source>
</reference>